<feature type="chain" id="PRO_1000130224" description="tRNA (guanine-N(1)-)-methyltransferase">
    <location>
        <begin position="1"/>
        <end position="252"/>
    </location>
</feature>
<feature type="binding site" evidence="1">
    <location>
        <position position="113"/>
    </location>
    <ligand>
        <name>S-adenosyl-L-methionine</name>
        <dbReference type="ChEBI" id="CHEBI:59789"/>
    </ligand>
</feature>
<feature type="binding site" evidence="1">
    <location>
        <begin position="133"/>
        <end position="138"/>
    </location>
    <ligand>
        <name>S-adenosyl-L-methionine</name>
        <dbReference type="ChEBI" id="CHEBI:59789"/>
    </ligand>
</feature>
<reference key="1">
    <citation type="journal article" date="2008" name="J. Biotechnol.">
        <title>The genome of Xanthomonas campestris pv. campestris B100 and its use for the reconstruction of metabolic pathways involved in xanthan biosynthesis.</title>
        <authorList>
            <person name="Vorhoelter F.-J."/>
            <person name="Schneiker S."/>
            <person name="Goesmann A."/>
            <person name="Krause L."/>
            <person name="Bekel T."/>
            <person name="Kaiser O."/>
            <person name="Linke B."/>
            <person name="Patschkowski T."/>
            <person name="Rueckert C."/>
            <person name="Schmid J."/>
            <person name="Sidhu V.K."/>
            <person name="Sieber V."/>
            <person name="Tauch A."/>
            <person name="Watt S.A."/>
            <person name="Weisshaar B."/>
            <person name="Becker A."/>
            <person name="Niehaus K."/>
            <person name="Puehler A."/>
        </authorList>
    </citation>
    <scope>NUCLEOTIDE SEQUENCE [LARGE SCALE GENOMIC DNA]</scope>
    <source>
        <strain>B100</strain>
    </source>
</reference>
<proteinExistence type="inferred from homology"/>
<name>TRMD_XANCB</name>
<sequence length="252" mass="27957">MRIDVISLFPEFIAQCAAFGVVGRAQERGLLELQGWNPRDHAQGNYRRVDDRPFGGGPGMVMLIEPLRACLEAAKAADARPAPVIYLSPQGRPLTQPLARELAQLPRMVLLCGRYEGVDERFLDQAVDMEISIGDYVLSGGELGAAVLVDVVTRLQDGVLNDAESAAQDSFEGPQGLLDCPHYSHPSSHAWGDVPEVLRSGNHGAIARWRRQQSLGRTWLRRPELLDEATLDKQDRRLLEEFRRELAPGDEK</sequence>
<accession>B0RXD7</accession>
<keyword id="KW-0963">Cytoplasm</keyword>
<keyword id="KW-0489">Methyltransferase</keyword>
<keyword id="KW-0949">S-adenosyl-L-methionine</keyword>
<keyword id="KW-0808">Transferase</keyword>
<keyword id="KW-0819">tRNA processing</keyword>
<comment type="function">
    <text evidence="1">Specifically methylates guanosine-37 in various tRNAs.</text>
</comment>
<comment type="catalytic activity">
    <reaction evidence="1">
        <text>guanosine(37) in tRNA + S-adenosyl-L-methionine = N(1)-methylguanosine(37) in tRNA + S-adenosyl-L-homocysteine + H(+)</text>
        <dbReference type="Rhea" id="RHEA:36899"/>
        <dbReference type="Rhea" id="RHEA-COMP:10145"/>
        <dbReference type="Rhea" id="RHEA-COMP:10147"/>
        <dbReference type="ChEBI" id="CHEBI:15378"/>
        <dbReference type="ChEBI" id="CHEBI:57856"/>
        <dbReference type="ChEBI" id="CHEBI:59789"/>
        <dbReference type="ChEBI" id="CHEBI:73542"/>
        <dbReference type="ChEBI" id="CHEBI:74269"/>
        <dbReference type="EC" id="2.1.1.228"/>
    </reaction>
</comment>
<comment type="subunit">
    <text evidence="1">Homodimer.</text>
</comment>
<comment type="subcellular location">
    <subcellularLocation>
        <location evidence="1">Cytoplasm</location>
    </subcellularLocation>
</comment>
<comment type="similarity">
    <text evidence="1">Belongs to the RNA methyltransferase TrmD family.</text>
</comment>
<gene>
    <name evidence="1" type="primary">trmD</name>
    <name type="ordered locus">xcc-b100_3138</name>
</gene>
<dbReference type="EC" id="2.1.1.228" evidence="1"/>
<dbReference type="EMBL" id="AM920689">
    <property type="protein sequence ID" value="CAP52503.1"/>
    <property type="molecule type" value="Genomic_DNA"/>
</dbReference>
<dbReference type="SMR" id="B0RXD7"/>
<dbReference type="KEGG" id="xca:xcc-b100_3138"/>
<dbReference type="HOGENOM" id="CLU_047363_0_1_6"/>
<dbReference type="Proteomes" id="UP000001188">
    <property type="component" value="Chromosome"/>
</dbReference>
<dbReference type="GO" id="GO:0005829">
    <property type="term" value="C:cytosol"/>
    <property type="evidence" value="ECO:0007669"/>
    <property type="project" value="TreeGrafter"/>
</dbReference>
<dbReference type="GO" id="GO:0052906">
    <property type="term" value="F:tRNA (guanine(37)-N1)-methyltransferase activity"/>
    <property type="evidence" value="ECO:0007669"/>
    <property type="project" value="UniProtKB-UniRule"/>
</dbReference>
<dbReference type="GO" id="GO:0002939">
    <property type="term" value="P:tRNA N1-guanine methylation"/>
    <property type="evidence" value="ECO:0007669"/>
    <property type="project" value="TreeGrafter"/>
</dbReference>
<dbReference type="CDD" id="cd18080">
    <property type="entry name" value="TrmD-like"/>
    <property type="match status" value="1"/>
</dbReference>
<dbReference type="FunFam" id="1.10.1270.20:FF:000001">
    <property type="entry name" value="tRNA (guanine-N(1)-)-methyltransferase"/>
    <property type="match status" value="1"/>
</dbReference>
<dbReference type="FunFam" id="3.40.1280.10:FF:000001">
    <property type="entry name" value="tRNA (guanine-N(1)-)-methyltransferase"/>
    <property type="match status" value="1"/>
</dbReference>
<dbReference type="Gene3D" id="3.40.1280.10">
    <property type="match status" value="1"/>
</dbReference>
<dbReference type="Gene3D" id="1.10.1270.20">
    <property type="entry name" value="tRNA(m1g37)methyltransferase, domain 2"/>
    <property type="match status" value="1"/>
</dbReference>
<dbReference type="HAMAP" id="MF_00605">
    <property type="entry name" value="TrmD"/>
    <property type="match status" value="1"/>
</dbReference>
<dbReference type="InterPro" id="IPR029028">
    <property type="entry name" value="Alpha/beta_knot_MTases"/>
</dbReference>
<dbReference type="InterPro" id="IPR023148">
    <property type="entry name" value="tRNA_m1G_MeTrfase_C_sf"/>
</dbReference>
<dbReference type="InterPro" id="IPR002649">
    <property type="entry name" value="tRNA_m1G_MeTrfase_TrmD"/>
</dbReference>
<dbReference type="InterPro" id="IPR029026">
    <property type="entry name" value="tRNA_m1G_MTases_N"/>
</dbReference>
<dbReference type="InterPro" id="IPR016009">
    <property type="entry name" value="tRNA_MeTrfase_TRMD/TRM10"/>
</dbReference>
<dbReference type="NCBIfam" id="NF000648">
    <property type="entry name" value="PRK00026.1"/>
    <property type="match status" value="1"/>
</dbReference>
<dbReference type="NCBIfam" id="TIGR00088">
    <property type="entry name" value="trmD"/>
    <property type="match status" value="1"/>
</dbReference>
<dbReference type="PANTHER" id="PTHR46417">
    <property type="entry name" value="TRNA (GUANINE-N(1)-)-METHYLTRANSFERASE"/>
    <property type="match status" value="1"/>
</dbReference>
<dbReference type="PANTHER" id="PTHR46417:SF1">
    <property type="entry name" value="TRNA (GUANINE-N(1)-)-METHYLTRANSFERASE"/>
    <property type="match status" value="1"/>
</dbReference>
<dbReference type="Pfam" id="PF01746">
    <property type="entry name" value="tRNA_m1G_MT"/>
    <property type="match status" value="1"/>
</dbReference>
<dbReference type="PIRSF" id="PIRSF000386">
    <property type="entry name" value="tRNA_mtase"/>
    <property type="match status" value="1"/>
</dbReference>
<dbReference type="SUPFAM" id="SSF75217">
    <property type="entry name" value="alpha/beta knot"/>
    <property type="match status" value="1"/>
</dbReference>
<evidence type="ECO:0000255" key="1">
    <source>
        <dbReference type="HAMAP-Rule" id="MF_00605"/>
    </source>
</evidence>
<protein>
    <recommendedName>
        <fullName evidence="1">tRNA (guanine-N(1)-)-methyltransferase</fullName>
        <ecNumber evidence="1">2.1.1.228</ecNumber>
    </recommendedName>
    <alternativeName>
        <fullName evidence="1">M1G-methyltransferase</fullName>
    </alternativeName>
    <alternativeName>
        <fullName evidence="1">tRNA [GM37] methyltransferase</fullName>
    </alternativeName>
</protein>
<organism>
    <name type="scientific">Xanthomonas campestris pv. campestris (strain B100)</name>
    <dbReference type="NCBI Taxonomy" id="509169"/>
    <lineage>
        <taxon>Bacteria</taxon>
        <taxon>Pseudomonadati</taxon>
        <taxon>Pseudomonadota</taxon>
        <taxon>Gammaproteobacteria</taxon>
        <taxon>Lysobacterales</taxon>
        <taxon>Lysobacteraceae</taxon>
        <taxon>Xanthomonas</taxon>
    </lineage>
</organism>